<comment type="function">
    <text evidence="1">Catalyzes the base-exchange of a guanine (G) residue with the queuine precursor 7-aminomethyl-7-deazaguanine (PreQ1) at position 34 (anticodon wobble position) in tRNAs with GU(N) anticodons (tRNA-Asp, -Asn, -His and -Tyr). Catalysis occurs through a double-displacement mechanism. The nucleophile active site attacks the C1' of nucleotide 34 to detach the guanine base from the RNA, forming a covalent enzyme-RNA intermediate. The proton acceptor active site deprotonates the incoming PreQ1, allowing a nucleophilic attack on the C1' of the ribose to form the product. After dissociation, two additional enzymatic reactions on the tRNA convert PreQ1 to queuine (Q), resulting in the hypermodified nucleoside queuosine (7-(((4,5-cis-dihydroxy-2-cyclopenten-1-yl)amino)methyl)-7-deazaguanosine).</text>
</comment>
<comment type="catalytic activity">
    <reaction evidence="1">
        <text>7-aminomethyl-7-carbaguanine + guanosine(34) in tRNA = 7-aminomethyl-7-carbaguanosine(34) in tRNA + guanine</text>
        <dbReference type="Rhea" id="RHEA:24104"/>
        <dbReference type="Rhea" id="RHEA-COMP:10341"/>
        <dbReference type="Rhea" id="RHEA-COMP:10342"/>
        <dbReference type="ChEBI" id="CHEBI:16235"/>
        <dbReference type="ChEBI" id="CHEBI:58703"/>
        <dbReference type="ChEBI" id="CHEBI:74269"/>
        <dbReference type="ChEBI" id="CHEBI:82833"/>
        <dbReference type="EC" id="2.4.2.29"/>
    </reaction>
</comment>
<comment type="cofactor">
    <cofactor evidence="1">
        <name>Zn(2+)</name>
        <dbReference type="ChEBI" id="CHEBI:29105"/>
    </cofactor>
    <text evidence="1">Binds 1 zinc ion per subunit.</text>
</comment>
<comment type="pathway">
    <text evidence="1">tRNA modification; tRNA-queuosine biosynthesis.</text>
</comment>
<comment type="subunit">
    <text evidence="1">Homodimer. Within each dimer, one monomer is responsible for RNA recognition and catalysis, while the other monomer binds to the replacement base PreQ1.</text>
</comment>
<comment type="similarity">
    <text evidence="1">Belongs to the queuine tRNA-ribosyltransferase family.</text>
</comment>
<sequence length="378" mass="43654">MFKFHLITKDGKARRGRIYTPHGVIETPVFMPVGTQGTVKAMLHKLLDEIGTQIILGNTYHLYLRPGTEIIKKAGGLHRFISWNKPILTDSGGYQVFSLAKGKFGNRKAKVKVSDEGVEFQDHLQGDKHFFTPEKVVEIQEIFGSDIMMPLDECVEYPVDKNYAEKALKRTINWLERSIKAKKREDQVLFGIVQGAFWKDLRKKAVEETLKFDEFLFGYSIGGLSVGEPKEIMYGMTEVVCELLPEKKPRYLMGVGKPEDILEAVERGVDMFDCVVPTRNARTGTLYTSQGVVDIRHSKWKEDFSPLDPECDCYTCRNFSKAYLRHLFVAEEISAYVLNTIHNLRFYLKMMEEVRKAIEEKRFKELKEKYLQRVKNKL</sequence>
<reference key="1">
    <citation type="journal article" date="1998" name="Nature">
        <title>The complete genome of the hyperthermophilic bacterium Aquifex aeolicus.</title>
        <authorList>
            <person name="Deckert G."/>
            <person name="Warren P.V."/>
            <person name="Gaasterland T."/>
            <person name="Young W.G."/>
            <person name="Lenox A.L."/>
            <person name="Graham D.E."/>
            <person name="Overbeek R."/>
            <person name="Snead M.A."/>
            <person name="Keller M."/>
            <person name="Aujay M."/>
            <person name="Huber R."/>
            <person name="Feldman R.A."/>
            <person name="Short J.M."/>
            <person name="Olsen G.J."/>
            <person name="Swanson R.V."/>
        </authorList>
    </citation>
    <scope>NUCLEOTIDE SEQUENCE [LARGE SCALE GENOMIC DNA]</scope>
    <source>
        <strain>VF5</strain>
    </source>
</reference>
<feature type="chain" id="PRO_0000135442" description="Queuine tRNA-ribosyltransferase">
    <location>
        <begin position="1"/>
        <end position="378"/>
    </location>
</feature>
<feature type="region of interest" description="RNA binding" evidence="1">
    <location>
        <begin position="254"/>
        <end position="260"/>
    </location>
</feature>
<feature type="region of interest" description="RNA binding; important for wobble base 34 recognition" evidence="1">
    <location>
        <begin position="278"/>
        <end position="282"/>
    </location>
</feature>
<feature type="active site" description="Proton acceptor" evidence="1">
    <location>
        <position position="90"/>
    </location>
</feature>
<feature type="active site" description="Nucleophile" evidence="1">
    <location>
        <position position="273"/>
    </location>
</feature>
<feature type="binding site" evidence="1">
    <location>
        <begin position="90"/>
        <end position="94"/>
    </location>
    <ligand>
        <name>substrate</name>
    </ligand>
</feature>
<feature type="binding site" evidence="1">
    <location>
        <position position="152"/>
    </location>
    <ligand>
        <name>substrate</name>
    </ligand>
</feature>
<feature type="binding site" evidence="1">
    <location>
        <position position="194"/>
    </location>
    <ligand>
        <name>substrate</name>
    </ligand>
</feature>
<feature type="binding site" evidence="1">
    <location>
        <position position="223"/>
    </location>
    <ligand>
        <name>substrate</name>
    </ligand>
</feature>
<feature type="binding site" evidence="1">
    <location>
        <position position="311"/>
    </location>
    <ligand>
        <name>Zn(2+)</name>
        <dbReference type="ChEBI" id="CHEBI:29105"/>
    </ligand>
</feature>
<feature type="binding site" evidence="1">
    <location>
        <position position="313"/>
    </location>
    <ligand>
        <name>Zn(2+)</name>
        <dbReference type="ChEBI" id="CHEBI:29105"/>
    </ligand>
</feature>
<feature type="binding site" evidence="1">
    <location>
        <position position="316"/>
    </location>
    <ligand>
        <name>Zn(2+)</name>
        <dbReference type="ChEBI" id="CHEBI:29105"/>
    </ligand>
</feature>
<feature type="binding site" evidence="1">
    <location>
        <position position="342"/>
    </location>
    <ligand>
        <name>Zn(2+)</name>
        <dbReference type="ChEBI" id="CHEBI:29105"/>
    </ligand>
</feature>
<gene>
    <name evidence="1" type="primary">tgt</name>
    <name type="ordered locus">aq_1308</name>
</gene>
<dbReference type="EC" id="2.4.2.29" evidence="1"/>
<dbReference type="EMBL" id="AE000657">
    <property type="protein sequence ID" value="AAC07288.1"/>
    <property type="molecule type" value="Genomic_DNA"/>
</dbReference>
<dbReference type="PIR" id="H70412">
    <property type="entry name" value="H70412"/>
</dbReference>
<dbReference type="RefSeq" id="NP_213895.1">
    <property type="nucleotide sequence ID" value="NC_000918.1"/>
</dbReference>
<dbReference type="RefSeq" id="WP_010880833.1">
    <property type="nucleotide sequence ID" value="NC_000918.1"/>
</dbReference>
<dbReference type="SMR" id="O67331"/>
<dbReference type="FunCoup" id="O67331">
    <property type="interactions" value="465"/>
</dbReference>
<dbReference type="STRING" id="224324.aq_1308"/>
<dbReference type="EnsemblBacteria" id="AAC07288">
    <property type="protein sequence ID" value="AAC07288"/>
    <property type="gene ID" value="aq_1308"/>
</dbReference>
<dbReference type="KEGG" id="aae:aq_1308"/>
<dbReference type="PATRIC" id="fig|224324.8.peg.1019"/>
<dbReference type="eggNOG" id="COG0343">
    <property type="taxonomic scope" value="Bacteria"/>
</dbReference>
<dbReference type="HOGENOM" id="CLU_022060_0_1_0"/>
<dbReference type="InParanoid" id="O67331"/>
<dbReference type="OrthoDB" id="9805417at2"/>
<dbReference type="UniPathway" id="UPA00392"/>
<dbReference type="Proteomes" id="UP000000798">
    <property type="component" value="Chromosome"/>
</dbReference>
<dbReference type="GO" id="GO:0005737">
    <property type="term" value="C:cytoplasm"/>
    <property type="evidence" value="ECO:0000318"/>
    <property type="project" value="GO_Central"/>
</dbReference>
<dbReference type="GO" id="GO:0005829">
    <property type="term" value="C:cytosol"/>
    <property type="evidence" value="ECO:0000318"/>
    <property type="project" value="GO_Central"/>
</dbReference>
<dbReference type="GO" id="GO:0046872">
    <property type="term" value="F:metal ion binding"/>
    <property type="evidence" value="ECO:0007669"/>
    <property type="project" value="UniProtKB-KW"/>
</dbReference>
<dbReference type="GO" id="GO:0008479">
    <property type="term" value="F:tRNA-guanosine(34) queuine transglycosylase activity"/>
    <property type="evidence" value="ECO:0007669"/>
    <property type="project" value="UniProtKB-UniRule"/>
</dbReference>
<dbReference type="GO" id="GO:0008616">
    <property type="term" value="P:queuosine biosynthetic process"/>
    <property type="evidence" value="ECO:0000318"/>
    <property type="project" value="GO_Central"/>
</dbReference>
<dbReference type="GO" id="GO:0002099">
    <property type="term" value="P:tRNA wobble guanine modification"/>
    <property type="evidence" value="ECO:0000318"/>
    <property type="project" value="GO_Central"/>
</dbReference>
<dbReference type="GO" id="GO:0101030">
    <property type="term" value="P:tRNA-guanine transglycosylation"/>
    <property type="evidence" value="ECO:0007669"/>
    <property type="project" value="InterPro"/>
</dbReference>
<dbReference type="FunFam" id="3.20.20.105:FF:000001">
    <property type="entry name" value="Queuine tRNA-ribosyltransferase"/>
    <property type="match status" value="1"/>
</dbReference>
<dbReference type="Gene3D" id="3.20.20.105">
    <property type="entry name" value="Queuine tRNA-ribosyltransferase-like"/>
    <property type="match status" value="1"/>
</dbReference>
<dbReference type="HAMAP" id="MF_00168">
    <property type="entry name" value="Q_tRNA_Tgt"/>
    <property type="match status" value="1"/>
</dbReference>
<dbReference type="InterPro" id="IPR050076">
    <property type="entry name" value="ArchSynthase1/Queuine_TRR"/>
</dbReference>
<dbReference type="InterPro" id="IPR004803">
    <property type="entry name" value="TGT"/>
</dbReference>
<dbReference type="InterPro" id="IPR036511">
    <property type="entry name" value="TGT-like_sf"/>
</dbReference>
<dbReference type="InterPro" id="IPR002616">
    <property type="entry name" value="tRNA_ribo_trans-like"/>
</dbReference>
<dbReference type="NCBIfam" id="TIGR00430">
    <property type="entry name" value="Q_tRNA_tgt"/>
    <property type="match status" value="1"/>
</dbReference>
<dbReference type="NCBIfam" id="TIGR00449">
    <property type="entry name" value="tgt_general"/>
    <property type="match status" value="1"/>
</dbReference>
<dbReference type="PANTHER" id="PTHR46499">
    <property type="entry name" value="QUEUINE TRNA-RIBOSYLTRANSFERASE"/>
    <property type="match status" value="1"/>
</dbReference>
<dbReference type="PANTHER" id="PTHR46499:SF1">
    <property type="entry name" value="QUEUINE TRNA-RIBOSYLTRANSFERASE"/>
    <property type="match status" value="1"/>
</dbReference>
<dbReference type="Pfam" id="PF01702">
    <property type="entry name" value="TGT"/>
    <property type="match status" value="1"/>
</dbReference>
<dbReference type="SUPFAM" id="SSF51713">
    <property type="entry name" value="tRNA-guanine transglycosylase"/>
    <property type="match status" value="1"/>
</dbReference>
<accession>O67331</accession>
<proteinExistence type="inferred from homology"/>
<evidence type="ECO:0000255" key="1">
    <source>
        <dbReference type="HAMAP-Rule" id="MF_00168"/>
    </source>
</evidence>
<keyword id="KW-0328">Glycosyltransferase</keyword>
<keyword id="KW-0479">Metal-binding</keyword>
<keyword id="KW-0671">Queuosine biosynthesis</keyword>
<keyword id="KW-1185">Reference proteome</keyword>
<keyword id="KW-0808">Transferase</keyword>
<keyword id="KW-0819">tRNA processing</keyword>
<keyword id="KW-0862">Zinc</keyword>
<organism>
    <name type="scientific">Aquifex aeolicus (strain VF5)</name>
    <dbReference type="NCBI Taxonomy" id="224324"/>
    <lineage>
        <taxon>Bacteria</taxon>
        <taxon>Pseudomonadati</taxon>
        <taxon>Aquificota</taxon>
        <taxon>Aquificia</taxon>
        <taxon>Aquificales</taxon>
        <taxon>Aquificaceae</taxon>
        <taxon>Aquifex</taxon>
    </lineage>
</organism>
<protein>
    <recommendedName>
        <fullName evidence="1">Queuine tRNA-ribosyltransferase</fullName>
        <ecNumber evidence="1">2.4.2.29</ecNumber>
    </recommendedName>
    <alternativeName>
        <fullName evidence="1">Guanine insertion enzyme</fullName>
    </alternativeName>
    <alternativeName>
        <fullName evidence="1">tRNA-guanine transglycosylase</fullName>
    </alternativeName>
</protein>
<name>TGT_AQUAE</name>